<proteinExistence type="inferred from homology"/>
<sequence length="293" mass="32202">MAITAQLVKELRQKTGAGMMDCKKALTETDGDIDKAIDLLREKGIAKAAKKADRIAAEGLTLIKTDGNTGVILEVNSETDFVAKNEGFQSLLNELADHLLAAKPATIEEAHASKMENGSTVEEHITSAIAKIGEKITLRRFSVITKEDNAAFGSYLHMGGRIGVLAVLNGTTDEELARDIAMHVAAVNPKYISRDQVSEEEANREREVLTQQALQEGKPENIVAKMVEGRLNKFFEEICLLDQAFVKNPDEKVKQVVAAKNASIQTYVRYEVGEGIEKRQDNFAEEVMSQVKK</sequence>
<comment type="function">
    <text evidence="1">Associates with the EF-Tu.GDP complex and induces the exchange of GDP to GTP. It remains bound to the aminoacyl-tRNA.EF-Tu.GTP complex up to the GTP hydrolysis stage on the ribosome.</text>
</comment>
<comment type="subcellular location">
    <subcellularLocation>
        <location evidence="1">Cytoplasm</location>
    </subcellularLocation>
</comment>
<comment type="similarity">
    <text evidence="1">Belongs to the EF-Ts family.</text>
</comment>
<accession>A8FDB4</accession>
<dbReference type="EMBL" id="CP000813">
    <property type="protein sequence ID" value="ABV62231.1"/>
    <property type="molecule type" value="Genomic_DNA"/>
</dbReference>
<dbReference type="RefSeq" id="WP_012009978.1">
    <property type="nucleotide sequence ID" value="NZ_VEIS01000003.1"/>
</dbReference>
<dbReference type="SMR" id="A8FDB4"/>
<dbReference type="STRING" id="315750.BPUM_1549"/>
<dbReference type="GeneID" id="5620812"/>
<dbReference type="KEGG" id="bpu:BPUM_1549"/>
<dbReference type="eggNOG" id="COG0264">
    <property type="taxonomic scope" value="Bacteria"/>
</dbReference>
<dbReference type="HOGENOM" id="CLU_047155_0_2_9"/>
<dbReference type="OrthoDB" id="9808348at2"/>
<dbReference type="Proteomes" id="UP000001355">
    <property type="component" value="Chromosome"/>
</dbReference>
<dbReference type="GO" id="GO:0005737">
    <property type="term" value="C:cytoplasm"/>
    <property type="evidence" value="ECO:0007669"/>
    <property type="project" value="UniProtKB-SubCell"/>
</dbReference>
<dbReference type="GO" id="GO:0003746">
    <property type="term" value="F:translation elongation factor activity"/>
    <property type="evidence" value="ECO:0007669"/>
    <property type="project" value="UniProtKB-UniRule"/>
</dbReference>
<dbReference type="CDD" id="cd14275">
    <property type="entry name" value="UBA_EF-Ts"/>
    <property type="match status" value="1"/>
</dbReference>
<dbReference type="FunFam" id="1.10.286.20:FF:000003">
    <property type="entry name" value="Elongation factor Ts"/>
    <property type="match status" value="1"/>
</dbReference>
<dbReference type="FunFam" id="1.10.8.10:FF:000001">
    <property type="entry name" value="Elongation factor Ts"/>
    <property type="match status" value="1"/>
</dbReference>
<dbReference type="Gene3D" id="1.10.286.20">
    <property type="match status" value="1"/>
</dbReference>
<dbReference type="Gene3D" id="1.10.8.10">
    <property type="entry name" value="DNA helicase RuvA subunit, C-terminal domain"/>
    <property type="match status" value="1"/>
</dbReference>
<dbReference type="Gene3D" id="3.30.479.20">
    <property type="entry name" value="Elongation factor Ts, dimerisation domain"/>
    <property type="match status" value="2"/>
</dbReference>
<dbReference type="HAMAP" id="MF_00050">
    <property type="entry name" value="EF_Ts"/>
    <property type="match status" value="1"/>
</dbReference>
<dbReference type="InterPro" id="IPR036402">
    <property type="entry name" value="EF-Ts_dimer_sf"/>
</dbReference>
<dbReference type="InterPro" id="IPR001816">
    <property type="entry name" value="Transl_elong_EFTs/EF1B"/>
</dbReference>
<dbReference type="InterPro" id="IPR014039">
    <property type="entry name" value="Transl_elong_EFTs/EF1B_dimer"/>
</dbReference>
<dbReference type="InterPro" id="IPR018101">
    <property type="entry name" value="Transl_elong_Ts_CS"/>
</dbReference>
<dbReference type="InterPro" id="IPR009060">
    <property type="entry name" value="UBA-like_sf"/>
</dbReference>
<dbReference type="NCBIfam" id="TIGR00116">
    <property type="entry name" value="tsf"/>
    <property type="match status" value="1"/>
</dbReference>
<dbReference type="PANTHER" id="PTHR11741">
    <property type="entry name" value="ELONGATION FACTOR TS"/>
    <property type="match status" value="1"/>
</dbReference>
<dbReference type="PANTHER" id="PTHR11741:SF0">
    <property type="entry name" value="ELONGATION FACTOR TS, MITOCHONDRIAL"/>
    <property type="match status" value="1"/>
</dbReference>
<dbReference type="Pfam" id="PF00889">
    <property type="entry name" value="EF_TS"/>
    <property type="match status" value="1"/>
</dbReference>
<dbReference type="SUPFAM" id="SSF54713">
    <property type="entry name" value="Elongation factor Ts (EF-Ts), dimerisation domain"/>
    <property type="match status" value="2"/>
</dbReference>
<dbReference type="SUPFAM" id="SSF46934">
    <property type="entry name" value="UBA-like"/>
    <property type="match status" value="1"/>
</dbReference>
<dbReference type="PROSITE" id="PS01126">
    <property type="entry name" value="EF_TS_1"/>
    <property type="match status" value="1"/>
</dbReference>
<dbReference type="PROSITE" id="PS01127">
    <property type="entry name" value="EF_TS_2"/>
    <property type="match status" value="1"/>
</dbReference>
<evidence type="ECO:0000255" key="1">
    <source>
        <dbReference type="HAMAP-Rule" id="MF_00050"/>
    </source>
</evidence>
<organism>
    <name type="scientific">Bacillus pumilus (strain SAFR-032)</name>
    <dbReference type="NCBI Taxonomy" id="315750"/>
    <lineage>
        <taxon>Bacteria</taxon>
        <taxon>Bacillati</taxon>
        <taxon>Bacillota</taxon>
        <taxon>Bacilli</taxon>
        <taxon>Bacillales</taxon>
        <taxon>Bacillaceae</taxon>
        <taxon>Bacillus</taxon>
    </lineage>
</organism>
<name>EFTS_BACP2</name>
<keyword id="KW-0963">Cytoplasm</keyword>
<keyword id="KW-0251">Elongation factor</keyword>
<keyword id="KW-0648">Protein biosynthesis</keyword>
<feature type="chain" id="PRO_1000057351" description="Elongation factor Ts">
    <location>
        <begin position="1"/>
        <end position="293"/>
    </location>
</feature>
<feature type="region of interest" description="Involved in Mg(2+) ion dislocation from EF-Tu" evidence="1">
    <location>
        <begin position="79"/>
        <end position="82"/>
    </location>
</feature>
<protein>
    <recommendedName>
        <fullName evidence="1">Elongation factor Ts</fullName>
        <shortName evidence="1">EF-Ts</shortName>
    </recommendedName>
</protein>
<gene>
    <name evidence="1" type="primary">tsf</name>
    <name type="ordered locus">BPUM_1549</name>
</gene>
<reference key="1">
    <citation type="journal article" date="2007" name="PLoS ONE">
        <title>Paradoxical DNA repair and peroxide resistance gene conservation in Bacillus pumilus SAFR-032.</title>
        <authorList>
            <person name="Gioia J."/>
            <person name="Yerrapragada S."/>
            <person name="Qin X."/>
            <person name="Jiang H."/>
            <person name="Igboeli O.C."/>
            <person name="Muzny D."/>
            <person name="Dugan-Rocha S."/>
            <person name="Ding Y."/>
            <person name="Hawes A."/>
            <person name="Liu W."/>
            <person name="Perez L."/>
            <person name="Kovar C."/>
            <person name="Dinh H."/>
            <person name="Lee S."/>
            <person name="Nazareth L."/>
            <person name="Blyth P."/>
            <person name="Holder M."/>
            <person name="Buhay C."/>
            <person name="Tirumalai M.R."/>
            <person name="Liu Y."/>
            <person name="Dasgupta I."/>
            <person name="Bokhetache L."/>
            <person name="Fujita M."/>
            <person name="Karouia F."/>
            <person name="Eswara Moorthy P."/>
            <person name="Siefert J."/>
            <person name="Uzman A."/>
            <person name="Buzumbo P."/>
            <person name="Verma A."/>
            <person name="Zwiya H."/>
            <person name="McWilliams B.D."/>
            <person name="Olowu A."/>
            <person name="Clinkenbeard K.D."/>
            <person name="Newcombe D."/>
            <person name="Golebiewski L."/>
            <person name="Petrosino J.F."/>
            <person name="Nicholson W.L."/>
            <person name="Fox G.E."/>
            <person name="Venkateswaran K."/>
            <person name="Highlander S.K."/>
            <person name="Weinstock G.M."/>
        </authorList>
    </citation>
    <scope>NUCLEOTIDE SEQUENCE [LARGE SCALE GENOMIC DNA]</scope>
    <source>
        <strain>SAFR-032</strain>
    </source>
</reference>